<comment type="function">
    <text evidence="3 4">Monooxygenase involved in the biosynthesis of ajmaline-type monoterpenoid indole alkaloids (MIAs) natural products, important plant-derived pharmaceuticals used in the therapy of heart disorders (PubMed:29942076, PubMed:38212296). Converts by cyclization the strictosidine-derived geissoschizine to the sarpagan alkaloid polyneuridine aldehyde, precursor of vomilenine, an intermediate chemical in the biosynthesis of ajmaline (PubMed:29942076). Converts by aromatization the tetrahydro-beta-carboline alkaloids tetrahydroalstonine and ajmalicine to the corresponding beta-carboline alkaloids alstonine and serpentine, respectively (PubMed:29942076).</text>
</comment>
<comment type="catalytic activity">
    <reaction evidence="3">
        <text>(19E)-geissoschizine + reduced [NADPH--hemoprotein reductase] + O2 = polyneuridine aldehyde + oxidized [NADPH--hemoprotein reductase] + 2 H2O + H(+)</text>
        <dbReference type="Rhea" id="RHEA:58124"/>
        <dbReference type="Rhea" id="RHEA-COMP:11964"/>
        <dbReference type="Rhea" id="RHEA-COMP:11965"/>
        <dbReference type="ChEBI" id="CHEBI:15377"/>
        <dbReference type="ChEBI" id="CHEBI:15378"/>
        <dbReference type="ChEBI" id="CHEBI:15379"/>
        <dbReference type="ChEBI" id="CHEBI:16829"/>
        <dbReference type="ChEBI" id="CHEBI:17037"/>
        <dbReference type="ChEBI" id="CHEBI:57618"/>
        <dbReference type="ChEBI" id="CHEBI:58210"/>
        <dbReference type="EC" id="1.14.19.81"/>
    </reaction>
    <physiologicalReaction direction="left-to-right" evidence="3">
        <dbReference type="Rhea" id="RHEA:58125"/>
    </physiologicalReaction>
</comment>
<comment type="catalytic activity">
    <reaction evidence="3">
        <text>tetrahydroalstonine + A + reduced [NADPH--hemoprotein reductase] + O2 = alstonine + AH2 + oxidized [NADPH--hemoprotein reductase] + 2 H2O + H(+)</text>
        <dbReference type="Rhea" id="RHEA:58128"/>
        <dbReference type="Rhea" id="RHEA-COMP:11964"/>
        <dbReference type="Rhea" id="RHEA-COMP:11965"/>
        <dbReference type="ChEBI" id="CHEBI:13193"/>
        <dbReference type="ChEBI" id="CHEBI:15377"/>
        <dbReference type="ChEBI" id="CHEBI:15378"/>
        <dbReference type="ChEBI" id="CHEBI:15379"/>
        <dbReference type="ChEBI" id="CHEBI:17499"/>
        <dbReference type="ChEBI" id="CHEBI:57618"/>
        <dbReference type="ChEBI" id="CHEBI:58210"/>
        <dbReference type="ChEBI" id="CHEBI:142526"/>
        <dbReference type="ChEBI" id="CHEBI:142530"/>
    </reaction>
    <physiologicalReaction direction="left-to-right" evidence="3">
        <dbReference type="Rhea" id="RHEA:58129"/>
    </physiologicalReaction>
</comment>
<comment type="catalytic activity">
    <reaction evidence="3">
        <text>ajmalicine + A + reduced [NADPH--hemoprotein reductase] + O2 = serpentine + AH2 + oxidized [NADPH--hemoprotein reductase] + 2 H2O + H(+)</text>
        <dbReference type="Rhea" id="RHEA:58132"/>
        <dbReference type="Rhea" id="RHEA-COMP:11964"/>
        <dbReference type="Rhea" id="RHEA-COMP:11965"/>
        <dbReference type="ChEBI" id="CHEBI:13193"/>
        <dbReference type="ChEBI" id="CHEBI:15377"/>
        <dbReference type="ChEBI" id="CHEBI:15378"/>
        <dbReference type="ChEBI" id="CHEBI:15379"/>
        <dbReference type="ChEBI" id="CHEBI:17499"/>
        <dbReference type="ChEBI" id="CHEBI:57618"/>
        <dbReference type="ChEBI" id="CHEBI:58210"/>
        <dbReference type="ChEBI" id="CHEBI:142527"/>
        <dbReference type="ChEBI" id="CHEBI:142531"/>
    </reaction>
    <physiologicalReaction direction="left-to-right" evidence="3">
        <dbReference type="Rhea" id="RHEA:58133"/>
    </physiologicalReaction>
</comment>
<comment type="cofactor">
    <cofactor evidence="1">
        <name>heme</name>
        <dbReference type="ChEBI" id="CHEBI:30413"/>
    </cofactor>
</comment>
<comment type="biophysicochemical properties">
    <kinetics>
        <KM evidence="3">22.5 uM for geissoschizine</KM>
    </kinetics>
</comment>
<comment type="pathway">
    <text evidence="3 4">Alkaloid biosynthesis; ajmaline biosynthesis.</text>
</comment>
<comment type="subcellular location">
    <subcellularLocation>
        <location evidence="8">Endoplasmic reticulum membrane</location>
        <topology evidence="2">Single-pass type II membrane protein</topology>
    </subcellularLocation>
</comment>
<comment type="tissue specificity">
    <text evidence="3">Highly expressed in roots (PubMed:29942076). Expressed at low levels in leaves, stems and flowers (PubMed:29942076).</text>
</comment>
<comment type="biotechnology">
    <text evidence="4">The strictosidine aglycone-producing AJM7-DeltaHYS yeast strain expressing pathway genes of the VOM module, RsGS, SBE (GsSBE, RsSBE1 or RsSBE2), RsPNAE, RsVS and RsVH, accumulates vomilenine (PubMed:38212296). Additionnal expression of pathway genes of the AJM module, RsVR, RsDHVR, AAE (RsAAE1 or RsAAE2) and RsNNMT, leads to the production of ajmaline (PubMed:38212296). Ajmaline is an anti-arrhythmic alkaloid commercially used as an efficient drug for the treatment of arrhythmic heart disorder (PubMed:38212296).</text>
</comment>
<comment type="similarity">
    <text evidence="7">Belongs to the cytochrome P450 family.</text>
</comment>
<evidence type="ECO:0000250" key="1">
    <source>
        <dbReference type="UniProtKB" id="Q96242"/>
    </source>
</evidence>
<evidence type="ECO:0000255" key="2"/>
<evidence type="ECO:0000269" key="3">
    <source>
    </source>
</evidence>
<evidence type="ECO:0000269" key="4">
    <source>
    </source>
</evidence>
<evidence type="ECO:0000303" key="5">
    <source>
    </source>
</evidence>
<evidence type="ECO:0000303" key="6">
    <source>
    </source>
</evidence>
<evidence type="ECO:0000305" key="7"/>
<evidence type="ECO:0000305" key="8">
    <source>
    </source>
</evidence>
<reference key="1">
    <citation type="journal article" date="2018" name="Nat. Chem. Biol.">
        <title>Sarpagan bridge enzyme has substrate-controlled cyclization and aromatization modes.</title>
        <authorList>
            <person name="Dang T.T."/>
            <person name="Franke J."/>
            <person name="Carqueijeiro I.S.T."/>
            <person name="Langley C."/>
            <person name="Courdavault V."/>
            <person name="O'Connor S.E."/>
        </authorList>
    </citation>
    <scope>NUCLEOTIDE SEQUENCE [MRNA]</scope>
    <scope>FUNCTION</scope>
    <scope>CATALYTIC ACTIVITY</scope>
    <scope>BIOPHYSICOCHEMICAL PROPERTIES</scope>
    <scope>SUBCELLULAR LOCATION</scope>
    <scope>TISSUE SPECIFICITY</scope>
    <scope>PATHWAY</scope>
</reference>
<reference key="2">
    <citation type="journal article" date="2024" name="Nat. Commun.">
        <title>De novo biosynthesis of antiarrhythmic alkaloid ajmaline.</title>
        <authorList>
            <person name="Guo J."/>
            <person name="Gao D."/>
            <person name="Lian J."/>
            <person name="Qu Y."/>
        </authorList>
    </citation>
    <scope>FUNCTION</scope>
    <scope>PATHWAY</scope>
    <scope>BIOTECHNOLOGY</scope>
</reference>
<keyword id="KW-0017">Alkaloid metabolism</keyword>
<keyword id="KW-0256">Endoplasmic reticulum</keyword>
<keyword id="KW-0349">Heme</keyword>
<keyword id="KW-0408">Iron</keyword>
<keyword id="KW-0472">Membrane</keyword>
<keyword id="KW-0479">Metal-binding</keyword>
<keyword id="KW-0503">Monooxygenase</keyword>
<keyword id="KW-0560">Oxidoreductase</keyword>
<keyword id="KW-0735">Signal-anchor</keyword>
<keyword id="KW-0812">Transmembrane</keyword>
<keyword id="KW-1133">Transmembrane helix</keyword>
<sequence length="503" mass="56236">MEISVTTSIALATIVFFLYKLATRPKSTKKQLPEASRLPIIGHTLHQMVGSLPHRVLKNLADQYGPVMHLQIGELSAIVISSADKAKEVLNTHGVLVADRPQTTVAKIMLYNSLGATFAPYGDYLKQLRQIYALELLSPKTVRSFWTIMEDELSTMVTSVKAEAGQPIVLHDKMLTYLYDTLCRATVGSVCNGRETLIMAARETSALSAAIRIEDLFPSVKILPVISGLKTRLTNLLKQLDTVLEDIIGEREKKMFSSNNQPLTEEEDMLGVLLMYKNGKGKDAKFRITNNDIKAIVWELILAGTLSSAAIVEWCMSEMIKNPRVMKKAQDEVRQVLKDKKTVSGSDLAKLEYVKMVVKESVRLHPPAPLLFPREVREDFEMDGMIIPKKSWVIINYWAVGTDPKTWHDAVKYEPERFSNSSVDFYGSHFELIPFGAGRRICPGILFGTTNVELLLASFLYHFDWKLPGGMKPEELDMNELFGAGCVRENPLCLIPSISVAGN</sequence>
<protein>
    <recommendedName>
        <fullName evidence="5 6">Sarpagan bridge enzyme 1</fullName>
        <shortName evidence="5 6">RsSBE1</shortName>
        <ecNumber evidence="3">1.14.19.81</ecNumber>
    </recommendedName>
    <alternativeName>
        <fullName evidence="5">Cytochrome P450 71AY4</fullName>
    </alternativeName>
    <alternativeName>
        <fullName>Polyneuridine aldehyde synthase</fullName>
    </alternativeName>
</protein>
<dbReference type="EC" id="1.14.19.81" evidence="3"/>
<dbReference type="EMBL" id="MF537711">
    <property type="status" value="NOT_ANNOTATED_CDS"/>
    <property type="molecule type" value="mRNA"/>
</dbReference>
<dbReference type="SMR" id="P0DO13"/>
<dbReference type="SABIO-RK" id="P0DO13"/>
<dbReference type="UniPathway" id="UPA00310"/>
<dbReference type="GO" id="GO:0005789">
    <property type="term" value="C:endoplasmic reticulum membrane"/>
    <property type="evidence" value="ECO:0007669"/>
    <property type="project" value="UniProtKB-SubCell"/>
</dbReference>
<dbReference type="GO" id="GO:0020037">
    <property type="term" value="F:heme binding"/>
    <property type="evidence" value="ECO:0007669"/>
    <property type="project" value="InterPro"/>
</dbReference>
<dbReference type="GO" id="GO:0005506">
    <property type="term" value="F:iron ion binding"/>
    <property type="evidence" value="ECO:0007669"/>
    <property type="project" value="InterPro"/>
</dbReference>
<dbReference type="GO" id="GO:0004497">
    <property type="term" value="F:monooxygenase activity"/>
    <property type="evidence" value="ECO:0007669"/>
    <property type="project" value="UniProtKB-KW"/>
</dbReference>
<dbReference type="GO" id="GO:0016705">
    <property type="term" value="F:oxidoreductase activity, acting on paired donors, with incorporation or reduction of molecular oxygen"/>
    <property type="evidence" value="ECO:0007669"/>
    <property type="project" value="InterPro"/>
</dbReference>
<dbReference type="GO" id="GO:0009821">
    <property type="term" value="P:alkaloid biosynthetic process"/>
    <property type="evidence" value="ECO:0007669"/>
    <property type="project" value="UniProtKB-ARBA"/>
</dbReference>
<dbReference type="CDD" id="cd11072">
    <property type="entry name" value="CYP71-like"/>
    <property type="match status" value="1"/>
</dbReference>
<dbReference type="FunFam" id="1.10.630.10:FF:000097">
    <property type="entry name" value="Cytochrome P-450 19"/>
    <property type="match status" value="1"/>
</dbReference>
<dbReference type="Gene3D" id="1.10.630.10">
    <property type="entry name" value="Cytochrome P450"/>
    <property type="match status" value="1"/>
</dbReference>
<dbReference type="InterPro" id="IPR001128">
    <property type="entry name" value="Cyt_P450"/>
</dbReference>
<dbReference type="InterPro" id="IPR017972">
    <property type="entry name" value="Cyt_P450_CS"/>
</dbReference>
<dbReference type="InterPro" id="IPR002401">
    <property type="entry name" value="Cyt_P450_E_grp-I"/>
</dbReference>
<dbReference type="InterPro" id="IPR036396">
    <property type="entry name" value="Cyt_P450_sf"/>
</dbReference>
<dbReference type="PANTHER" id="PTHR47955:SF8">
    <property type="entry name" value="CYTOCHROME P450 71D11-LIKE"/>
    <property type="match status" value="1"/>
</dbReference>
<dbReference type="PANTHER" id="PTHR47955">
    <property type="entry name" value="CYTOCHROME P450 FAMILY 71 PROTEIN"/>
    <property type="match status" value="1"/>
</dbReference>
<dbReference type="Pfam" id="PF00067">
    <property type="entry name" value="p450"/>
    <property type="match status" value="1"/>
</dbReference>
<dbReference type="PRINTS" id="PR00463">
    <property type="entry name" value="EP450I"/>
</dbReference>
<dbReference type="PRINTS" id="PR00385">
    <property type="entry name" value="P450"/>
</dbReference>
<dbReference type="SUPFAM" id="SSF48264">
    <property type="entry name" value="Cytochrome P450"/>
    <property type="match status" value="1"/>
</dbReference>
<dbReference type="PROSITE" id="PS00086">
    <property type="entry name" value="CYTOCHROME_P450"/>
    <property type="match status" value="1"/>
</dbReference>
<accession>P0DO13</accession>
<organism>
    <name type="scientific">Rauvolfia serpentina</name>
    <name type="common">Serpentine wood</name>
    <name type="synonym">Ophioxylon serpentinum</name>
    <dbReference type="NCBI Taxonomy" id="4060"/>
    <lineage>
        <taxon>Eukaryota</taxon>
        <taxon>Viridiplantae</taxon>
        <taxon>Streptophyta</taxon>
        <taxon>Embryophyta</taxon>
        <taxon>Tracheophyta</taxon>
        <taxon>Spermatophyta</taxon>
        <taxon>Magnoliopsida</taxon>
        <taxon>eudicotyledons</taxon>
        <taxon>Gunneridae</taxon>
        <taxon>Pentapetalae</taxon>
        <taxon>asterids</taxon>
        <taxon>lamiids</taxon>
        <taxon>Gentianales</taxon>
        <taxon>Apocynaceae</taxon>
        <taxon>Rauvolfioideae</taxon>
        <taxon>Vinceae</taxon>
        <taxon>Rauvolfiinae</taxon>
        <taxon>Rauvolfia</taxon>
    </lineage>
</organism>
<name>SBE1_RAUSE</name>
<feature type="chain" id="PRO_0000446226" description="Sarpagan bridge enzyme 1">
    <location>
        <begin position="1"/>
        <end position="503"/>
    </location>
</feature>
<feature type="transmembrane region" description="Helical; Signal-anchor for type II membrane protein" evidence="2">
    <location>
        <begin position="3"/>
        <end position="23"/>
    </location>
</feature>
<feature type="binding site" description="axial binding residue" evidence="1">
    <location>
        <position position="442"/>
    </location>
    <ligand>
        <name>heme</name>
        <dbReference type="ChEBI" id="CHEBI:30413"/>
    </ligand>
    <ligandPart>
        <name>Fe</name>
        <dbReference type="ChEBI" id="CHEBI:18248"/>
    </ligandPart>
</feature>
<proteinExistence type="evidence at protein level"/>
<gene>
    <name evidence="5 6" type="primary">SBE1</name>
    <name evidence="5" type="synonym">CYP71AY4</name>
</gene>